<keyword id="KW-0560">Oxidoreductase</keyword>
<keyword id="KW-0663">Pyridoxal phosphate</keyword>
<protein>
    <recommendedName>
        <fullName evidence="1">Glycine dehydrogenase (decarboxylating)</fullName>
        <ecNumber evidence="1">1.4.4.2</ecNumber>
    </recommendedName>
    <alternativeName>
        <fullName evidence="1">Glycine cleavage system P-protein</fullName>
    </alternativeName>
    <alternativeName>
        <fullName evidence="1">Glycine decarboxylase</fullName>
    </alternativeName>
    <alternativeName>
        <fullName evidence="1">Glycine dehydrogenase (aminomethyl-transferring)</fullName>
    </alternativeName>
</protein>
<feature type="chain" id="PRO_0000166941" description="Glycine dehydrogenase (decarboxylating)">
    <location>
        <begin position="1"/>
        <end position="959"/>
    </location>
</feature>
<feature type="modified residue" description="N6-(pyridoxal phosphate)lysine" evidence="1">
    <location>
        <position position="704"/>
    </location>
</feature>
<sequence length="959" mass="102194">MTSPFLQRHVGPSDSEQQQMLSALGYADMAAFLADVVPEDILDEFPPQGLLPPGCGEAEALVHLREIAAANNSRRSLIGLGYYGTSTPALIQRHVFENPAWYTAYTPYQAEIAQGRLEALLNFQTLISELTGLPIANASLLDEATAAAEAMSLSYGICRRTEANRFLVDANVLPQTWAVLQTRAEPLGIDLERVTPEQASFDASVFGVLLQLPGADGQIWDPTAVIARAHEAGALVTVAIDPLAQALIAPVASFGADIAVGSAQRFGVPMGFGGPHAAFFATKDTYKRQIPGRLVGQSRDSAGNPALRLALQTREQHIRRDKATSNICTAQVLLAVMASFYAVHHGPEGLMSIARRIVGQRRQLERALQSLGFVVPDGERFDTVTVTSALAPAVHQAVGEAGFNLRVLPDGANPAESTGFGIALDECTTADELSRLVAALATAAGQTSPSLPLAPVEELCGVPERVDPWLSQSVFHDHLSETELMRYIQRLVSRDLSLVHGMIPLGSCTMKLNAAAELLPVSWPAFAGLHPFAPMAQAAGYQRLAEQLEAWLAALTGFAAVSLQPNAGSQGEYAGLLVIRAWHRSRGDDHRDVCLIPTSAHGTNPASAVMAGLKVVAVACDADGNIDQQDLAARAAEHADRLAALMVTYPSTHGVFETGIRGICELVHRHGGQVYLDGANLNAQVGLCRPGAFGADVCHLNLHKTFCIPHGGGGPGVGPIGVADHLAPFLPGHPMQASPDQAIGPVSAAALGSASILPISWMYLRMMGAEALRQATAVALLSANYLALRLDPHYPVLFRGATGRVAHECILDLRPLKRDAGIDVDDIAKRLMDYGFHAPTVSWPVAGTVMVEPTESESLAELDRFADAMIAIRNEIRDIESGAMDASNNPLKQAPHTMAAVIAEDWDRPYSRQQAAFPLPDQQQNKVWPAVARIDNAYGDRNLICTCPSVEEIAVAVAA</sequence>
<accession>Q7U3Q5</accession>
<proteinExistence type="inferred from homology"/>
<dbReference type="EC" id="1.4.4.2" evidence="1"/>
<dbReference type="EMBL" id="BX569695">
    <property type="protein sequence ID" value="CAE08889.1"/>
    <property type="molecule type" value="Genomic_DNA"/>
</dbReference>
<dbReference type="RefSeq" id="WP_011129227.1">
    <property type="nucleotide sequence ID" value="NC_005070.1"/>
</dbReference>
<dbReference type="SMR" id="Q7U3Q5"/>
<dbReference type="STRING" id="84588.SYNW2374"/>
<dbReference type="KEGG" id="syw:SYNW2374"/>
<dbReference type="eggNOG" id="COG0403">
    <property type="taxonomic scope" value="Bacteria"/>
</dbReference>
<dbReference type="eggNOG" id="COG1003">
    <property type="taxonomic scope" value="Bacteria"/>
</dbReference>
<dbReference type="HOGENOM" id="CLU_004620_3_2_3"/>
<dbReference type="Proteomes" id="UP000001422">
    <property type="component" value="Chromosome"/>
</dbReference>
<dbReference type="GO" id="GO:0005829">
    <property type="term" value="C:cytosol"/>
    <property type="evidence" value="ECO:0007669"/>
    <property type="project" value="TreeGrafter"/>
</dbReference>
<dbReference type="GO" id="GO:0005960">
    <property type="term" value="C:glycine cleavage complex"/>
    <property type="evidence" value="ECO:0007669"/>
    <property type="project" value="TreeGrafter"/>
</dbReference>
<dbReference type="GO" id="GO:0016594">
    <property type="term" value="F:glycine binding"/>
    <property type="evidence" value="ECO:0007669"/>
    <property type="project" value="TreeGrafter"/>
</dbReference>
<dbReference type="GO" id="GO:0004375">
    <property type="term" value="F:glycine dehydrogenase (decarboxylating) activity"/>
    <property type="evidence" value="ECO:0007669"/>
    <property type="project" value="UniProtKB-EC"/>
</dbReference>
<dbReference type="GO" id="GO:0030170">
    <property type="term" value="F:pyridoxal phosphate binding"/>
    <property type="evidence" value="ECO:0007669"/>
    <property type="project" value="TreeGrafter"/>
</dbReference>
<dbReference type="GO" id="GO:0019464">
    <property type="term" value="P:glycine decarboxylation via glycine cleavage system"/>
    <property type="evidence" value="ECO:0007669"/>
    <property type="project" value="UniProtKB-UniRule"/>
</dbReference>
<dbReference type="CDD" id="cd00613">
    <property type="entry name" value="GDC-P"/>
    <property type="match status" value="2"/>
</dbReference>
<dbReference type="FunFam" id="3.40.640.10:FF:000005">
    <property type="entry name" value="Glycine dehydrogenase (decarboxylating), mitochondrial"/>
    <property type="match status" value="1"/>
</dbReference>
<dbReference type="FunFam" id="3.90.1150.10:FF:000007">
    <property type="entry name" value="Glycine dehydrogenase (decarboxylating), mitochondrial"/>
    <property type="match status" value="1"/>
</dbReference>
<dbReference type="FunFam" id="3.40.640.10:FF:000007">
    <property type="entry name" value="glycine dehydrogenase (Decarboxylating), mitochondrial"/>
    <property type="match status" value="1"/>
</dbReference>
<dbReference type="Gene3D" id="3.90.1150.10">
    <property type="entry name" value="Aspartate Aminotransferase, domain 1"/>
    <property type="match status" value="2"/>
</dbReference>
<dbReference type="Gene3D" id="3.40.640.10">
    <property type="entry name" value="Type I PLP-dependent aspartate aminotransferase-like (Major domain)"/>
    <property type="match status" value="2"/>
</dbReference>
<dbReference type="HAMAP" id="MF_00711">
    <property type="entry name" value="GcvP"/>
    <property type="match status" value="1"/>
</dbReference>
<dbReference type="InterPro" id="IPR003437">
    <property type="entry name" value="GcvP"/>
</dbReference>
<dbReference type="InterPro" id="IPR049316">
    <property type="entry name" value="GDC-P_C"/>
</dbReference>
<dbReference type="InterPro" id="IPR049315">
    <property type="entry name" value="GDC-P_N"/>
</dbReference>
<dbReference type="InterPro" id="IPR020581">
    <property type="entry name" value="GDC_P"/>
</dbReference>
<dbReference type="InterPro" id="IPR015424">
    <property type="entry name" value="PyrdxlP-dep_Trfase"/>
</dbReference>
<dbReference type="InterPro" id="IPR015421">
    <property type="entry name" value="PyrdxlP-dep_Trfase_major"/>
</dbReference>
<dbReference type="InterPro" id="IPR015422">
    <property type="entry name" value="PyrdxlP-dep_Trfase_small"/>
</dbReference>
<dbReference type="NCBIfam" id="TIGR00461">
    <property type="entry name" value="gcvP"/>
    <property type="match status" value="1"/>
</dbReference>
<dbReference type="PANTHER" id="PTHR11773:SF1">
    <property type="entry name" value="GLYCINE DEHYDROGENASE (DECARBOXYLATING), MITOCHONDRIAL"/>
    <property type="match status" value="1"/>
</dbReference>
<dbReference type="PANTHER" id="PTHR11773">
    <property type="entry name" value="GLYCINE DEHYDROGENASE, DECARBOXYLATING"/>
    <property type="match status" value="1"/>
</dbReference>
<dbReference type="Pfam" id="PF21478">
    <property type="entry name" value="GcvP2_C"/>
    <property type="match status" value="1"/>
</dbReference>
<dbReference type="Pfam" id="PF02347">
    <property type="entry name" value="GDC-P"/>
    <property type="match status" value="2"/>
</dbReference>
<dbReference type="SUPFAM" id="SSF53383">
    <property type="entry name" value="PLP-dependent transferases"/>
    <property type="match status" value="2"/>
</dbReference>
<evidence type="ECO:0000255" key="1">
    <source>
        <dbReference type="HAMAP-Rule" id="MF_00711"/>
    </source>
</evidence>
<comment type="function">
    <text evidence="1">The glycine cleavage system catalyzes the degradation of glycine. The P protein binds the alpha-amino group of glycine through its pyridoxal phosphate cofactor; CO(2) is released and the remaining methylamine moiety is then transferred to the lipoamide cofactor of the H protein.</text>
</comment>
<comment type="catalytic activity">
    <reaction evidence="1">
        <text>N(6)-[(R)-lipoyl]-L-lysyl-[glycine-cleavage complex H protein] + glycine + H(+) = N(6)-[(R)-S(8)-aminomethyldihydrolipoyl]-L-lysyl-[glycine-cleavage complex H protein] + CO2</text>
        <dbReference type="Rhea" id="RHEA:24304"/>
        <dbReference type="Rhea" id="RHEA-COMP:10494"/>
        <dbReference type="Rhea" id="RHEA-COMP:10495"/>
        <dbReference type="ChEBI" id="CHEBI:15378"/>
        <dbReference type="ChEBI" id="CHEBI:16526"/>
        <dbReference type="ChEBI" id="CHEBI:57305"/>
        <dbReference type="ChEBI" id="CHEBI:83099"/>
        <dbReference type="ChEBI" id="CHEBI:83143"/>
        <dbReference type="EC" id="1.4.4.2"/>
    </reaction>
</comment>
<comment type="cofactor">
    <cofactor evidence="1">
        <name>pyridoxal 5'-phosphate</name>
        <dbReference type="ChEBI" id="CHEBI:597326"/>
    </cofactor>
</comment>
<comment type="subunit">
    <text evidence="1">The glycine cleavage system is composed of four proteins: P, T, L and H.</text>
</comment>
<comment type="similarity">
    <text evidence="1">Belongs to the GcvP family.</text>
</comment>
<name>GCSP_PARMW</name>
<gene>
    <name evidence="1" type="primary">gcvP</name>
    <name type="ordered locus">SYNW2374</name>
</gene>
<reference key="1">
    <citation type="journal article" date="2003" name="Nature">
        <title>The genome of a motile marine Synechococcus.</title>
        <authorList>
            <person name="Palenik B."/>
            <person name="Brahamsha B."/>
            <person name="Larimer F.W."/>
            <person name="Land M.L."/>
            <person name="Hauser L."/>
            <person name="Chain P."/>
            <person name="Lamerdin J.E."/>
            <person name="Regala W."/>
            <person name="Allen E.E."/>
            <person name="McCarren J."/>
            <person name="Paulsen I.T."/>
            <person name="Dufresne A."/>
            <person name="Partensky F."/>
            <person name="Webb E.A."/>
            <person name="Waterbury J."/>
        </authorList>
    </citation>
    <scope>NUCLEOTIDE SEQUENCE [LARGE SCALE GENOMIC DNA]</scope>
    <source>
        <strain>WH8102</strain>
    </source>
</reference>
<organism>
    <name type="scientific">Parasynechococcus marenigrum (strain WH8102)</name>
    <dbReference type="NCBI Taxonomy" id="84588"/>
    <lineage>
        <taxon>Bacteria</taxon>
        <taxon>Bacillati</taxon>
        <taxon>Cyanobacteriota</taxon>
        <taxon>Cyanophyceae</taxon>
        <taxon>Synechococcales</taxon>
        <taxon>Prochlorococcaceae</taxon>
        <taxon>Parasynechococcus</taxon>
        <taxon>Parasynechococcus marenigrum</taxon>
    </lineage>
</organism>